<comment type="function">
    <text evidence="1">Catalyzes the phosphorylation of pantothenate (Pan), the first step in CoA biosynthesis.</text>
</comment>
<comment type="catalytic activity">
    <reaction evidence="1">
        <text>(R)-pantothenate + ATP = (R)-4'-phosphopantothenate + ADP + H(+)</text>
        <dbReference type="Rhea" id="RHEA:16373"/>
        <dbReference type="ChEBI" id="CHEBI:10986"/>
        <dbReference type="ChEBI" id="CHEBI:15378"/>
        <dbReference type="ChEBI" id="CHEBI:29032"/>
        <dbReference type="ChEBI" id="CHEBI:30616"/>
        <dbReference type="ChEBI" id="CHEBI:456216"/>
        <dbReference type="EC" id="2.7.1.33"/>
    </reaction>
</comment>
<comment type="cofactor">
    <cofactor evidence="1">
        <name>NH4(+)</name>
        <dbReference type="ChEBI" id="CHEBI:28938"/>
    </cofactor>
    <cofactor evidence="1">
        <name>K(+)</name>
        <dbReference type="ChEBI" id="CHEBI:29103"/>
    </cofactor>
    <text evidence="1">A monovalent cation. Ammonium or potassium.</text>
</comment>
<comment type="pathway">
    <text evidence="1">Cofactor biosynthesis; coenzyme A biosynthesis; CoA from (R)-pantothenate: step 1/5.</text>
</comment>
<comment type="subunit">
    <text evidence="1">Homodimer.</text>
</comment>
<comment type="subcellular location">
    <subcellularLocation>
        <location evidence="1">Cytoplasm</location>
    </subcellularLocation>
</comment>
<comment type="similarity">
    <text evidence="1">Belongs to the type III pantothenate kinase family.</text>
</comment>
<protein>
    <recommendedName>
        <fullName evidence="1">Type III pantothenate kinase 1</fullName>
        <ecNumber evidence="1">2.7.1.33</ecNumber>
    </recommendedName>
    <alternativeName>
        <fullName evidence="1">PanK-III 1</fullName>
    </alternativeName>
    <alternativeName>
        <fullName evidence="1">Pantothenic acid kinase 1</fullName>
    </alternativeName>
</protein>
<evidence type="ECO:0000255" key="1">
    <source>
        <dbReference type="HAMAP-Rule" id="MF_01274"/>
    </source>
</evidence>
<sequence>MLLVMDMGNSHIHIGVFDGDRIVSQIRYATSSVDSTSDQMGVFLRQALRENSVDLGKIDGCGISSVVPHLNYSLGSAVIKYFNIKPFFISMDTTDLDMSAVEAHQVGADRIASCISAIADHPNKDLLIIDLGTATTFDLVTKDKKYLSGSIMPGVKLSLNALCQGASQLSSVTIVKPEVAIGYDTKTNIRSGLYYGHLGALKELKRRSVEEFGSPVYTIATGGFAGLFKEEDIFNEISPDLILRGIRIAFLENNKKGV</sequence>
<dbReference type="EC" id="2.7.1.33" evidence="1"/>
<dbReference type="EMBL" id="AM286280">
    <property type="protein sequence ID" value="CAL08128.1"/>
    <property type="molecule type" value="Genomic_DNA"/>
</dbReference>
<dbReference type="RefSeq" id="WP_003019854.1">
    <property type="nucleotide sequence ID" value="NC_008245.1"/>
</dbReference>
<dbReference type="SMR" id="Q14JW3"/>
<dbReference type="KEGG" id="ftf:FTF0112"/>
<dbReference type="HOGENOM" id="CLU_066627_1_1_6"/>
<dbReference type="UniPathway" id="UPA00241">
    <property type="reaction ID" value="UER00352"/>
</dbReference>
<dbReference type="GO" id="GO:0005737">
    <property type="term" value="C:cytoplasm"/>
    <property type="evidence" value="ECO:0007669"/>
    <property type="project" value="UniProtKB-SubCell"/>
</dbReference>
<dbReference type="GO" id="GO:0005524">
    <property type="term" value="F:ATP binding"/>
    <property type="evidence" value="ECO:0007669"/>
    <property type="project" value="UniProtKB-UniRule"/>
</dbReference>
<dbReference type="GO" id="GO:0046872">
    <property type="term" value="F:metal ion binding"/>
    <property type="evidence" value="ECO:0007669"/>
    <property type="project" value="UniProtKB-KW"/>
</dbReference>
<dbReference type="GO" id="GO:0004594">
    <property type="term" value="F:pantothenate kinase activity"/>
    <property type="evidence" value="ECO:0007669"/>
    <property type="project" value="UniProtKB-UniRule"/>
</dbReference>
<dbReference type="GO" id="GO:0015937">
    <property type="term" value="P:coenzyme A biosynthetic process"/>
    <property type="evidence" value="ECO:0007669"/>
    <property type="project" value="UniProtKB-UniRule"/>
</dbReference>
<dbReference type="CDD" id="cd24015">
    <property type="entry name" value="ASKHA_NBD_PanK-III"/>
    <property type="match status" value="1"/>
</dbReference>
<dbReference type="Gene3D" id="3.30.420.40">
    <property type="match status" value="2"/>
</dbReference>
<dbReference type="HAMAP" id="MF_01274">
    <property type="entry name" value="Pantothen_kinase_3"/>
    <property type="match status" value="1"/>
</dbReference>
<dbReference type="InterPro" id="IPR043129">
    <property type="entry name" value="ATPase_NBD"/>
</dbReference>
<dbReference type="InterPro" id="IPR004619">
    <property type="entry name" value="Type_III_PanK"/>
</dbReference>
<dbReference type="NCBIfam" id="TIGR00671">
    <property type="entry name" value="baf"/>
    <property type="match status" value="1"/>
</dbReference>
<dbReference type="NCBIfam" id="NF009855">
    <property type="entry name" value="PRK13321.1"/>
    <property type="match status" value="1"/>
</dbReference>
<dbReference type="NCBIfam" id="NF009861">
    <property type="entry name" value="PRK13324.1"/>
    <property type="match status" value="1"/>
</dbReference>
<dbReference type="PANTHER" id="PTHR34265">
    <property type="entry name" value="TYPE III PANTOTHENATE KINASE"/>
    <property type="match status" value="1"/>
</dbReference>
<dbReference type="PANTHER" id="PTHR34265:SF1">
    <property type="entry name" value="TYPE III PANTOTHENATE KINASE"/>
    <property type="match status" value="1"/>
</dbReference>
<dbReference type="Pfam" id="PF03309">
    <property type="entry name" value="Pan_kinase"/>
    <property type="match status" value="1"/>
</dbReference>
<dbReference type="SUPFAM" id="SSF53067">
    <property type="entry name" value="Actin-like ATPase domain"/>
    <property type="match status" value="2"/>
</dbReference>
<feature type="chain" id="PRO_0000267536" description="Type III pantothenate kinase 1">
    <location>
        <begin position="1"/>
        <end position="258"/>
    </location>
</feature>
<feature type="active site" description="Proton acceptor" evidence="1">
    <location>
        <position position="109"/>
    </location>
</feature>
<feature type="binding site" evidence="1">
    <location>
        <begin position="6"/>
        <end position="13"/>
    </location>
    <ligand>
        <name>ATP</name>
        <dbReference type="ChEBI" id="CHEBI:30616"/>
    </ligand>
</feature>
<feature type="binding site" evidence="1">
    <location>
        <begin position="107"/>
        <end position="110"/>
    </location>
    <ligand>
        <name>substrate</name>
    </ligand>
</feature>
<feature type="binding site" evidence="1">
    <location>
        <position position="130"/>
    </location>
    <ligand>
        <name>K(+)</name>
        <dbReference type="ChEBI" id="CHEBI:29103"/>
    </ligand>
</feature>
<feature type="binding site" evidence="1">
    <location>
        <position position="133"/>
    </location>
    <ligand>
        <name>ATP</name>
        <dbReference type="ChEBI" id="CHEBI:30616"/>
    </ligand>
</feature>
<feature type="binding site" evidence="1">
    <location>
        <position position="185"/>
    </location>
    <ligand>
        <name>substrate</name>
    </ligand>
</feature>
<proteinExistence type="inferred from homology"/>
<organism>
    <name type="scientific">Francisella tularensis subsp. tularensis (strain FSC 198)</name>
    <dbReference type="NCBI Taxonomy" id="393115"/>
    <lineage>
        <taxon>Bacteria</taxon>
        <taxon>Pseudomonadati</taxon>
        <taxon>Pseudomonadota</taxon>
        <taxon>Gammaproteobacteria</taxon>
        <taxon>Thiotrichales</taxon>
        <taxon>Francisellaceae</taxon>
        <taxon>Francisella</taxon>
    </lineage>
</organism>
<gene>
    <name evidence="1" type="primary">coaX1</name>
    <name type="ordered locus">FTF0112</name>
</gene>
<name>COAX1_FRAT1</name>
<keyword id="KW-0067">ATP-binding</keyword>
<keyword id="KW-0173">Coenzyme A biosynthesis</keyword>
<keyword id="KW-0963">Cytoplasm</keyword>
<keyword id="KW-0418">Kinase</keyword>
<keyword id="KW-0479">Metal-binding</keyword>
<keyword id="KW-0547">Nucleotide-binding</keyword>
<keyword id="KW-0630">Potassium</keyword>
<keyword id="KW-0808">Transferase</keyword>
<accession>Q14JW3</accession>
<reference key="1">
    <citation type="journal article" date="2007" name="PLoS ONE">
        <title>Genome sequencing shows that European isolates of Francisella tularensis subspecies tularensis are almost identical to US laboratory strain Schu S4.</title>
        <authorList>
            <person name="Chaudhuri R.R."/>
            <person name="Ren C.-P."/>
            <person name="Desmond L."/>
            <person name="Vincent G.A."/>
            <person name="Silman N.J."/>
            <person name="Brehm J.K."/>
            <person name="Elmore M.J."/>
            <person name="Hudson M.J."/>
            <person name="Forsman M."/>
            <person name="Isherwood K.E."/>
            <person name="Gurycova D."/>
            <person name="Minton N.P."/>
            <person name="Titball R.W."/>
            <person name="Pallen M.J."/>
            <person name="Vipond R."/>
        </authorList>
    </citation>
    <scope>NUCLEOTIDE SEQUENCE [LARGE SCALE GENOMIC DNA]</scope>
    <source>
        <strain>FSC 198</strain>
    </source>
</reference>